<protein>
    <recommendedName>
        <fullName>Uncharacterized gene 45 protein</fullName>
    </recommendedName>
</protein>
<feature type="chain" id="PRO_0000406029" description="Uncharacterized gene 45 protein">
    <location>
        <begin position="1"/>
        <end position="321"/>
    </location>
</feature>
<feature type="region of interest" description="Disordered" evidence="1">
    <location>
        <begin position="1"/>
        <end position="59"/>
    </location>
</feature>
<feature type="region of interest" description="Disordered" evidence="1">
    <location>
        <begin position="71"/>
        <end position="289"/>
    </location>
</feature>
<feature type="compositionally biased region" description="Basic residues" evidence="1">
    <location>
        <begin position="1"/>
        <end position="12"/>
    </location>
</feature>
<feature type="compositionally biased region" description="Basic and acidic residues" evidence="1">
    <location>
        <begin position="50"/>
        <end position="59"/>
    </location>
</feature>
<feature type="compositionally biased region" description="Acidic residues" evidence="1">
    <location>
        <begin position="99"/>
        <end position="115"/>
    </location>
</feature>
<feature type="compositionally biased region" description="Low complexity" evidence="1">
    <location>
        <begin position="156"/>
        <end position="175"/>
    </location>
</feature>
<feature type="compositionally biased region" description="Basic and acidic residues" evidence="1">
    <location>
        <begin position="179"/>
        <end position="189"/>
    </location>
</feature>
<feature type="compositionally biased region" description="Low complexity" evidence="1">
    <location>
        <begin position="231"/>
        <end position="242"/>
    </location>
</feature>
<name>VG45_EHV2</name>
<gene>
    <name type="primary">45</name>
</gene>
<dbReference type="EMBL" id="U20824">
    <property type="protein sequence ID" value="AAC13833.1"/>
    <property type="molecule type" value="Genomic_DNA"/>
</dbReference>
<dbReference type="PIR" id="S55640">
    <property type="entry name" value="S55640"/>
</dbReference>
<dbReference type="KEGG" id="vg:1461090"/>
<dbReference type="Proteomes" id="UP000007083">
    <property type="component" value="Segment"/>
</dbReference>
<sequence>MSMFLKKQKKTKGGSSEEKRRGRTGSPPRMTSDPGAPRLKRATYFQFPKDGIKETMRKTKDAGDLDDVFFEDCTQCNPPSHVPVFSKPKPRTRAGGAADDSDSESSEDGGEDDEETLHSQDTPPGGSSSDSDDDDQKLPFTATGGIKMPGYMSRISDSSSSSSSSSDSESSSSSDSESDGDRSTPEPDILRQVTSSLARGVSPPRAKPPPAKGEVPVISLLSSEESDSEGEPSPLRAAAAAASQKRKHTSSSSDNDPKHTKVIYISSGESEDEGEGAGAGEGEPLGPEDQVLVVMSQESCEHYMATTPPVAGNPPYNWPWL</sequence>
<organismHost>
    <name type="scientific">Equus caballus</name>
    <name type="common">Horse</name>
    <dbReference type="NCBI Taxonomy" id="9796"/>
</organismHost>
<reference key="1">
    <citation type="journal article" date="1995" name="J. Mol. Biol.">
        <title>The DNA sequence of equine herpesvirus 2.</title>
        <authorList>
            <person name="Telford E.A.R."/>
            <person name="Watson M.S."/>
            <person name="Aird H.C."/>
            <person name="Perry J."/>
            <person name="Davison A.J."/>
        </authorList>
    </citation>
    <scope>NUCLEOTIDE SEQUENCE [LARGE SCALE GENOMIC DNA]</scope>
</reference>
<organism>
    <name type="scientific">Equine herpesvirus 2 (strain 86/87)</name>
    <name type="common">EHV-2</name>
    <dbReference type="NCBI Taxonomy" id="82831"/>
    <lineage>
        <taxon>Viruses</taxon>
        <taxon>Duplodnaviria</taxon>
        <taxon>Heunggongvirae</taxon>
        <taxon>Peploviricota</taxon>
        <taxon>Herviviricetes</taxon>
        <taxon>Herpesvirales</taxon>
        <taxon>Orthoherpesviridae</taxon>
        <taxon>Gammaherpesvirinae</taxon>
        <taxon>Percavirus</taxon>
        <taxon>Percavirus equidgamma2</taxon>
        <taxon>Equid gammaherpesvirus 2</taxon>
    </lineage>
</organism>
<keyword id="KW-1185">Reference proteome</keyword>
<accession>Q66648</accession>
<evidence type="ECO:0000256" key="1">
    <source>
        <dbReference type="SAM" id="MobiDB-lite"/>
    </source>
</evidence>
<proteinExistence type="predicted"/>